<protein>
    <recommendedName>
        <fullName evidence="1">Probable ribosomal RNA small subunit methyltransferase A</fullName>
        <ecNumber evidence="1">2.1.1.-</ecNumber>
    </recommendedName>
    <alternativeName>
        <fullName evidence="1">16S rRNA dimethyladenosine transferase</fullName>
    </alternativeName>
    <alternativeName>
        <fullName evidence="1">16S rRNA dimethylase</fullName>
    </alternativeName>
    <alternativeName>
        <fullName evidence="1">S-adenosylmethionine-6-N',N'-adenosyl(rRNA) dimethyltransferase</fullName>
    </alternativeName>
</protein>
<dbReference type="EC" id="2.1.1.-" evidence="1"/>
<dbReference type="EMBL" id="AP006878">
    <property type="protein sequence ID" value="BAD85088.1"/>
    <property type="molecule type" value="Genomic_DNA"/>
</dbReference>
<dbReference type="RefSeq" id="WP_011249850.1">
    <property type="nucleotide sequence ID" value="NC_006624.1"/>
</dbReference>
<dbReference type="SMR" id="Q5JI54"/>
<dbReference type="FunCoup" id="Q5JI54">
    <property type="interactions" value="91"/>
</dbReference>
<dbReference type="STRING" id="69014.TK0899"/>
<dbReference type="EnsemblBacteria" id="BAD85088">
    <property type="protein sequence ID" value="BAD85088"/>
    <property type="gene ID" value="TK0899"/>
</dbReference>
<dbReference type="GeneID" id="78447414"/>
<dbReference type="KEGG" id="tko:TK0899"/>
<dbReference type="PATRIC" id="fig|69014.16.peg.878"/>
<dbReference type="eggNOG" id="arCOG04131">
    <property type="taxonomic scope" value="Archaea"/>
</dbReference>
<dbReference type="HOGENOM" id="CLU_041220_0_2_2"/>
<dbReference type="InParanoid" id="Q5JI54"/>
<dbReference type="OrthoDB" id="9883at2157"/>
<dbReference type="PhylomeDB" id="Q5JI54"/>
<dbReference type="Proteomes" id="UP000000536">
    <property type="component" value="Chromosome"/>
</dbReference>
<dbReference type="GO" id="GO:0005737">
    <property type="term" value="C:cytoplasm"/>
    <property type="evidence" value="ECO:0007669"/>
    <property type="project" value="UniProtKB-SubCell"/>
</dbReference>
<dbReference type="GO" id="GO:0003723">
    <property type="term" value="F:RNA binding"/>
    <property type="evidence" value="ECO:0007669"/>
    <property type="project" value="UniProtKB-KW"/>
</dbReference>
<dbReference type="GO" id="GO:0000179">
    <property type="term" value="F:rRNA (adenine-N6,N6-)-dimethyltransferase activity"/>
    <property type="evidence" value="ECO:0000318"/>
    <property type="project" value="GO_Central"/>
</dbReference>
<dbReference type="GO" id="GO:0031167">
    <property type="term" value="P:rRNA methylation"/>
    <property type="evidence" value="ECO:0000318"/>
    <property type="project" value="GO_Central"/>
</dbReference>
<dbReference type="CDD" id="cd02440">
    <property type="entry name" value="AdoMet_MTases"/>
    <property type="match status" value="1"/>
</dbReference>
<dbReference type="FunFam" id="3.40.50.150:FF:000023">
    <property type="entry name" value="Ribosomal RNA small subunit methyltransferase A"/>
    <property type="match status" value="1"/>
</dbReference>
<dbReference type="Gene3D" id="1.10.8.100">
    <property type="entry name" value="Ribosomal RNA adenine dimethylase-like, domain 2"/>
    <property type="match status" value="1"/>
</dbReference>
<dbReference type="Gene3D" id="3.40.50.150">
    <property type="entry name" value="Vaccinia Virus protein VP39"/>
    <property type="match status" value="1"/>
</dbReference>
<dbReference type="HAMAP" id="MF_00607">
    <property type="entry name" value="16SrRNA_methyltr_A"/>
    <property type="match status" value="1"/>
</dbReference>
<dbReference type="InterPro" id="IPR001737">
    <property type="entry name" value="KsgA/Erm"/>
</dbReference>
<dbReference type="InterPro" id="IPR023165">
    <property type="entry name" value="rRNA_Ade_diMease-like_C"/>
</dbReference>
<dbReference type="InterPro" id="IPR020596">
    <property type="entry name" value="rRNA_Ade_Mease_Trfase_CS"/>
</dbReference>
<dbReference type="InterPro" id="IPR020598">
    <property type="entry name" value="rRNA_Ade_methylase_Trfase_N"/>
</dbReference>
<dbReference type="InterPro" id="IPR011530">
    <property type="entry name" value="rRNA_adenine_dimethylase"/>
</dbReference>
<dbReference type="InterPro" id="IPR029063">
    <property type="entry name" value="SAM-dependent_MTases_sf"/>
</dbReference>
<dbReference type="NCBIfam" id="TIGR00755">
    <property type="entry name" value="ksgA"/>
    <property type="match status" value="1"/>
</dbReference>
<dbReference type="PANTHER" id="PTHR11727">
    <property type="entry name" value="DIMETHYLADENOSINE TRANSFERASE"/>
    <property type="match status" value="1"/>
</dbReference>
<dbReference type="PANTHER" id="PTHR11727:SF7">
    <property type="entry name" value="DIMETHYLADENOSINE TRANSFERASE-RELATED"/>
    <property type="match status" value="1"/>
</dbReference>
<dbReference type="Pfam" id="PF00398">
    <property type="entry name" value="RrnaAD"/>
    <property type="match status" value="1"/>
</dbReference>
<dbReference type="SMART" id="SM00650">
    <property type="entry name" value="rADc"/>
    <property type="match status" value="1"/>
</dbReference>
<dbReference type="SUPFAM" id="SSF53335">
    <property type="entry name" value="S-adenosyl-L-methionine-dependent methyltransferases"/>
    <property type="match status" value="1"/>
</dbReference>
<dbReference type="PROSITE" id="PS01131">
    <property type="entry name" value="RRNA_A_DIMETH"/>
    <property type="match status" value="1"/>
</dbReference>
<dbReference type="PROSITE" id="PS51689">
    <property type="entry name" value="SAM_RNA_A_N6_MT"/>
    <property type="match status" value="1"/>
</dbReference>
<organism>
    <name type="scientific">Thermococcus kodakarensis (strain ATCC BAA-918 / JCM 12380 / KOD1)</name>
    <name type="common">Pyrococcus kodakaraensis (strain KOD1)</name>
    <dbReference type="NCBI Taxonomy" id="69014"/>
    <lineage>
        <taxon>Archaea</taxon>
        <taxon>Methanobacteriati</taxon>
        <taxon>Methanobacteriota</taxon>
        <taxon>Thermococci</taxon>
        <taxon>Thermococcales</taxon>
        <taxon>Thermococcaceae</taxon>
        <taxon>Thermococcus</taxon>
    </lineage>
</organism>
<proteinExistence type="inferred from homology"/>
<comment type="function">
    <text evidence="1">Specifically dimethylates two adjacent adenosines in the loop of a conserved hairpin near the 3'-end of 16S rRNA in the 30S particle. May play a critical role in biogenesis of 30S subunits.</text>
</comment>
<comment type="subcellular location">
    <subcellularLocation>
        <location evidence="1">Cytoplasm</location>
    </subcellularLocation>
</comment>
<comment type="similarity">
    <text evidence="1">Belongs to the class I-like SAM-binding methyltransferase superfamily. rRNA adenine N(6)-methyltransferase family. RsmA subfamily.</text>
</comment>
<feature type="chain" id="PRO_0000101665" description="Probable ribosomal RNA small subunit methyltransferase A">
    <location>
        <begin position="1"/>
        <end position="279"/>
    </location>
</feature>
<feature type="binding site" evidence="1">
    <location>
        <position position="23"/>
    </location>
    <ligand>
        <name>S-adenosyl-L-methionine</name>
        <dbReference type="ChEBI" id="CHEBI:59789"/>
    </ligand>
</feature>
<feature type="binding site" evidence="1">
    <location>
        <position position="25"/>
    </location>
    <ligand>
        <name>S-adenosyl-L-methionine</name>
        <dbReference type="ChEBI" id="CHEBI:59789"/>
    </ligand>
</feature>
<feature type="binding site" evidence="1">
    <location>
        <position position="50"/>
    </location>
    <ligand>
        <name>S-adenosyl-L-methionine</name>
        <dbReference type="ChEBI" id="CHEBI:59789"/>
    </ligand>
</feature>
<feature type="binding site" evidence="1">
    <location>
        <position position="71"/>
    </location>
    <ligand>
        <name>S-adenosyl-L-methionine</name>
        <dbReference type="ChEBI" id="CHEBI:59789"/>
    </ligand>
</feature>
<feature type="binding site" evidence="1">
    <location>
        <position position="95"/>
    </location>
    <ligand>
        <name>S-adenosyl-L-methionine</name>
        <dbReference type="ChEBI" id="CHEBI:59789"/>
    </ligand>
</feature>
<feature type="binding site" evidence="1">
    <location>
        <position position="110"/>
    </location>
    <ligand>
        <name>S-adenosyl-L-methionine</name>
        <dbReference type="ChEBI" id="CHEBI:59789"/>
    </ligand>
</feature>
<keyword id="KW-0963">Cytoplasm</keyword>
<keyword id="KW-0489">Methyltransferase</keyword>
<keyword id="KW-1185">Reference proteome</keyword>
<keyword id="KW-0694">RNA-binding</keyword>
<keyword id="KW-0698">rRNA processing</keyword>
<keyword id="KW-0949">S-adenosyl-L-methionine</keyword>
<keyword id="KW-0808">Transferase</keyword>
<gene>
    <name evidence="1" type="primary">rsmA</name>
    <name evidence="1" type="synonym">ksgA</name>
    <name type="ordered locus">TK0899</name>
</gene>
<evidence type="ECO:0000255" key="1">
    <source>
        <dbReference type="HAMAP-Rule" id="MF_00607"/>
    </source>
</evidence>
<reference key="1">
    <citation type="journal article" date="2005" name="Genome Res.">
        <title>Complete genome sequence of the hyperthermophilic archaeon Thermococcus kodakaraensis KOD1 and comparison with Pyrococcus genomes.</title>
        <authorList>
            <person name="Fukui T."/>
            <person name="Atomi H."/>
            <person name="Kanai T."/>
            <person name="Matsumi R."/>
            <person name="Fujiwara S."/>
            <person name="Imanaka T."/>
        </authorList>
    </citation>
    <scope>NUCLEOTIDE SEQUENCE [LARGE SCALE GENOMIC DNA]</scope>
    <source>
        <strain>ATCC BAA-918 / JCM 12380 / KOD1</strain>
    </source>
</reference>
<name>RSMA_THEKO</name>
<accession>Q5JI54</accession>
<sequence length="279" mass="32148">MRDRLFSIIYKYNLHPNRDLGQNFLIVPDIIERNIERAEVGEKDTVLEIGPGLGVLTDPLSKRAGKVYAIEKDCRIVEILRREYNWPNVEIIEGDALKVEWPEFNKMVSNLPYQISSPVTFKLLSREFERAVLIFQLEFAERMVAKPGDKNYSRLSLMVRAKARAELVERIGKGAFWPRPKVDSAVVVLEPKPPEERIDLNENLVKALFQHRRSTVSAALKKSAHMLGLSKDKARELRQVFSRVPHSERRVFQLSPEDVLEIEEFLKKEGVIESYPASP</sequence>